<reference evidence="5" key="1">
    <citation type="journal article" date="2007" name="Nature">
        <title>Evolution of genes and genomes on the Drosophila phylogeny.</title>
        <authorList>
            <consortium name="Drosophila 12 genomes consortium"/>
        </authorList>
    </citation>
    <scope>NUCLEOTIDE SEQUENCE [LARGE SCALE GENOMIC DNA]</scope>
    <source>
        <strain evidence="5">Tucson 15010-1051.87</strain>
    </source>
</reference>
<name>FOXO_DROVI</name>
<comment type="function">
    <text evidence="1">Transcription factor involved in the regulation of the insulin signaling pathway. Consistently activates both the downstream target Thor\d4EBP and the feedback control target InR. Involved in negative regulation of the cell cycle, modulating cell growth and proliferation. In response to cellular stresses, such as nutrient deprivation or increased levels of reactive oxygen species, foxo is activated and inhibits growth through the action of target genes such as Thor. Foxo activated in the adult fat body can regulate lifespan in adults; an insulin peptide itself may function as one secondary messenger of insulin-regulated aging. Also regulates Lip4, homolog of human acid lipases, thereby acting as a key modulator of lipid metabolism by insulin signaling and integrates insulin responses to glucose and lipid homeostasis (By similarity).</text>
</comment>
<comment type="subunit">
    <text evidence="2">Interacts with melt.</text>
</comment>
<comment type="subcellular location">
    <subcellularLocation>
        <location evidence="2">Cytoplasm</location>
    </subcellularLocation>
    <subcellularLocation>
        <location evidence="2 3">Nucleus</location>
    </subcellularLocation>
    <text evidence="2">When phosphorylated, translocated from nucleus to cytoplasm. Dephosphorylation triggers nuclear translocation (By similarity).</text>
</comment>
<accession>B4MB78</accession>
<proteinExistence type="inferred from homology"/>
<evidence type="ECO:0000250" key="1"/>
<evidence type="ECO:0000250" key="2">
    <source>
        <dbReference type="UniProtKB" id="Q95V55"/>
    </source>
</evidence>
<evidence type="ECO:0000255" key="3">
    <source>
        <dbReference type="PROSITE-ProRule" id="PRU00089"/>
    </source>
</evidence>
<evidence type="ECO:0000256" key="4">
    <source>
        <dbReference type="SAM" id="MobiDB-lite"/>
    </source>
</evidence>
<evidence type="ECO:0000312" key="5">
    <source>
        <dbReference type="EMBL" id="EDW58349.1"/>
    </source>
</evidence>
<protein>
    <recommendedName>
        <fullName evidence="2">Forkhead box protein O</fullName>
    </recommendedName>
</protein>
<dbReference type="EMBL" id="CH940656">
    <property type="protein sequence ID" value="EDW58349.1"/>
    <property type="molecule type" value="Genomic_DNA"/>
</dbReference>
<dbReference type="RefSeq" id="XP_002058381.1">
    <property type="nucleotide sequence ID" value="XM_002058345.2"/>
</dbReference>
<dbReference type="RefSeq" id="XP_032294878.1">
    <property type="nucleotide sequence ID" value="XM_032438987.2"/>
</dbReference>
<dbReference type="SMR" id="B4MB78"/>
<dbReference type="FunCoup" id="B4MB78">
    <property type="interactions" value="333"/>
</dbReference>
<dbReference type="STRING" id="7244.B4MB78"/>
<dbReference type="EnsemblMetazoa" id="FBtr0230269">
    <property type="protein sequence ID" value="FBpp0228761"/>
    <property type="gene ID" value="FBgn0201557"/>
</dbReference>
<dbReference type="EnsemblMetazoa" id="XM_032438987.1">
    <property type="protein sequence ID" value="XP_032294878.1"/>
    <property type="gene ID" value="LOC6635144"/>
</dbReference>
<dbReference type="GeneID" id="6635144"/>
<dbReference type="eggNOG" id="KOG2294">
    <property type="taxonomic scope" value="Eukaryota"/>
</dbReference>
<dbReference type="HOGENOM" id="CLU_024472_1_0_1"/>
<dbReference type="InParanoid" id="B4MB78"/>
<dbReference type="OMA" id="WWMINRD"/>
<dbReference type="OrthoDB" id="5954824at2759"/>
<dbReference type="PhylomeDB" id="B4MB78"/>
<dbReference type="ChiTaRS" id="foxo">
    <property type="organism name" value="fly"/>
</dbReference>
<dbReference type="Proteomes" id="UP000008792">
    <property type="component" value="Unassembled WGS sequence"/>
</dbReference>
<dbReference type="GO" id="GO:0005737">
    <property type="term" value="C:cytoplasm"/>
    <property type="evidence" value="ECO:0000250"/>
    <property type="project" value="UniProtKB"/>
</dbReference>
<dbReference type="GO" id="GO:0005634">
    <property type="term" value="C:nucleus"/>
    <property type="evidence" value="ECO:0000250"/>
    <property type="project" value="UniProtKB"/>
</dbReference>
<dbReference type="GO" id="GO:0003700">
    <property type="term" value="F:DNA-binding transcription factor activity"/>
    <property type="evidence" value="ECO:0000250"/>
    <property type="project" value="UniProtKB"/>
</dbReference>
<dbReference type="GO" id="GO:0000981">
    <property type="term" value="F:DNA-binding transcription factor activity, RNA polymerase II-specific"/>
    <property type="evidence" value="ECO:0007669"/>
    <property type="project" value="TreeGrafter"/>
</dbReference>
<dbReference type="GO" id="GO:0000978">
    <property type="term" value="F:RNA polymerase II cis-regulatory region sequence-specific DNA binding"/>
    <property type="evidence" value="ECO:0007669"/>
    <property type="project" value="TreeGrafter"/>
</dbReference>
<dbReference type="GO" id="GO:0030154">
    <property type="term" value="P:cell differentiation"/>
    <property type="evidence" value="ECO:0007669"/>
    <property type="project" value="UniProtKB-KW"/>
</dbReference>
<dbReference type="GO" id="GO:0042593">
    <property type="term" value="P:glucose homeostasis"/>
    <property type="evidence" value="ECO:0000250"/>
    <property type="project" value="UniProtKB"/>
</dbReference>
<dbReference type="GO" id="GO:0030308">
    <property type="term" value="P:negative regulation of cell growth"/>
    <property type="evidence" value="ECO:0000250"/>
    <property type="project" value="UniProtKB"/>
</dbReference>
<dbReference type="GO" id="GO:0008285">
    <property type="term" value="P:negative regulation of cell population proliferation"/>
    <property type="evidence" value="ECO:0000250"/>
    <property type="project" value="UniProtKB"/>
</dbReference>
<dbReference type="GO" id="GO:0046627">
    <property type="term" value="P:negative regulation of insulin receptor signaling pathway"/>
    <property type="evidence" value="ECO:0000250"/>
    <property type="project" value="UniProtKB"/>
</dbReference>
<dbReference type="GO" id="GO:0006355">
    <property type="term" value="P:regulation of DNA-templated transcription"/>
    <property type="evidence" value="ECO:0000250"/>
    <property type="project" value="UniProtKB"/>
</dbReference>
<dbReference type="GO" id="GO:0019216">
    <property type="term" value="P:regulation of lipid metabolic process"/>
    <property type="evidence" value="ECO:0000250"/>
    <property type="project" value="UniProtKB"/>
</dbReference>
<dbReference type="CDD" id="cd20032">
    <property type="entry name" value="FH_FOXO"/>
    <property type="match status" value="1"/>
</dbReference>
<dbReference type="FunFam" id="1.10.10.10:FF:000032">
    <property type="entry name" value="Forkhead box protein O4"/>
    <property type="match status" value="1"/>
</dbReference>
<dbReference type="Gene3D" id="1.10.10.10">
    <property type="entry name" value="Winged helix-like DNA-binding domain superfamily/Winged helix DNA-binding domain"/>
    <property type="match status" value="1"/>
</dbReference>
<dbReference type="InterPro" id="IPR001766">
    <property type="entry name" value="Fork_head_dom"/>
</dbReference>
<dbReference type="InterPro" id="IPR030456">
    <property type="entry name" value="TF_fork_head_CS_2"/>
</dbReference>
<dbReference type="InterPro" id="IPR036388">
    <property type="entry name" value="WH-like_DNA-bd_sf"/>
</dbReference>
<dbReference type="InterPro" id="IPR036390">
    <property type="entry name" value="WH_DNA-bd_sf"/>
</dbReference>
<dbReference type="PANTHER" id="PTHR45767">
    <property type="entry name" value="FORKHEAD BOX PROTEIN O"/>
    <property type="match status" value="1"/>
</dbReference>
<dbReference type="PANTHER" id="PTHR45767:SF2">
    <property type="entry name" value="FORKHEAD BOX PROTEIN O"/>
    <property type="match status" value="1"/>
</dbReference>
<dbReference type="Pfam" id="PF00250">
    <property type="entry name" value="Forkhead"/>
    <property type="match status" value="1"/>
</dbReference>
<dbReference type="PRINTS" id="PR00053">
    <property type="entry name" value="FORKHEAD"/>
</dbReference>
<dbReference type="SMART" id="SM00339">
    <property type="entry name" value="FH"/>
    <property type="match status" value="1"/>
</dbReference>
<dbReference type="SUPFAM" id="SSF46785">
    <property type="entry name" value="Winged helix' DNA-binding domain"/>
    <property type="match status" value="1"/>
</dbReference>
<dbReference type="PROSITE" id="PS00658">
    <property type="entry name" value="FORK_HEAD_2"/>
    <property type="match status" value="1"/>
</dbReference>
<dbReference type="PROSITE" id="PS50039">
    <property type="entry name" value="FORK_HEAD_3"/>
    <property type="match status" value="1"/>
</dbReference>
<gene>
    <name evidence="2" type="primary">foxo</name>
    <name type="ORF">GJ14344</name>
</gene>
<keyword id="KW-0010">Activator</keyword>
<keyword id="KW-0131">Cell cycle</keyword>
<keyword id="KW-0963">Cytoplasm</keyword>
<keyword id="KW-0217">Developmental protein</keyword>
<keyword id="KW-0221">Differentiation</keyword>
<keyword id="KW-0238">DNA-binding</keyword>
<keyword id="KW-0341">Growth regulation</keyword>
<keyword id="KW-0539">Nucleus</keyword>
<keyword id="KW-0597">Phosphoprotein</keyword>
<keyword id="KW-1185">Reference proteome</keyword>
<keyword id="KW-0804">Transcription</keyword>
<keyword id="KW-0805">Transcription regulation</keyword>
<feature type="chain" id="PRO_0000396511" description="Forkhead box protein O">
    <location>
        <begin position="1"/>
        <end position="609"/>
    </location>
</feature>
<feature type="DNA-binding region" description="Fork-head" evidence="3">
    <location>
        <begin position="94"/>
        <end position="200"/>
    </location>
</feature>
<feature type="region of interest" description="Disordered" evidence="4">
    <location>
        <begin position="1"/>
        <end position="89"/>
    </location>
</feature>
<feature type="region of interest" description="Disordered" evidence="4">
    <location>
        <begin position="181"/>
        <end position="263"/>
    </location>
</feature>
<feature type="region of interest" description="Disordered" evidence="4">
    <location>
        <begin position="321"/>
        <end position="365"/>
    </location>
</feature>
<feature type="region of interest" description="Disordered" evidence="4">
    <location>
        <begin position="384"/>
        <end position="411"/>
    </location>
</feature>
<feature type="compositionally biased region" description="Polar residues" evidence="4">
    <location>
        <begin position="62"/>
        <end position="79"/>
    </location>
</feature>
<feature type="compositionally biased region" description="Low complexity" evidence="4">
    <location>
        <begin position="80"/>
        <end position="89"/>
    </location>
</feature>
<feature type="compositionally biased region" description="Polar residues" evidence="4">
    <location>
        <begin position="220"/>
        <end position="229"/>
    </location>
</feature>
<feature type="compositionally biased region" description="Polar residues" evidence="4">
    <location>
        <begin position="254"/>
        <end position="263"/>
    </location>
</feature>
<feature type="compositionally biased region" description="Pro residues" evidence="4">
    <location>
        <begin position="327"/>
        <end position="339"/>
    </location>
</feature>
<feature type="compositionally biased region" description="Polar residues" evidence="4">
    <location>
        <begin position="388"/>
        <end position="397"/>
    </location>
</feature>
<feature type="modified residue" description="Phosphothreonine; by PKB/AKT1" evidence="2">
    <location>
        <position position="43"/>
    </location>
</feature>
<feature type="modified residue" description="Phosphoserine; by PKB/AKT1" evidence="2">
    <location>
        <position position="189"/>
    </location>
</feature>
<feature type="modified residue" description="Phosphoserine; by PKB/AKT1" evidence="2">
    <location>
        <position position="257"/>
    </location>
</feature>
<feature type="modified residue" description="Phosphoserine" evidence="2">
    <location>
        <position position="260"/>
    </location>
</feature>
<feature type="modified residue" description="Phosphoserine" evidence="2">
    <location>
        <position position="261"/>
    </location>
</feature>
<feature type="modified residue" description="Phosphoserine" evidence="2">
    <location>
        <position position="266"/>
    </location>
</feature>
<sequence>MDGFAQDWPNLPRSDNGLHMDQLVGELPTDGGFEPQTRARSNTWPCPRPENFVEPVDELDSTKASNQQLASGDPQQAMQNANAAKKNSSRRNAWGNLSYADLITHAIGSATDKRLTLSQIYEWMVQNVSYFKDKGDSNSSAGWKNSIRHNLSLHNRFMRVQNEGTGKSSWWMLNPEAKPGKSVRRRAASMETSRYEKRRGRAKKRVEALRQGGVVGLNDATPSPSSSVSEGLDHFPESPLHSGGFQLSPDFRQRASSNASSCGRLSPIRALDLEPDWGFSVDYQNTTMTQAQAQQLDQLAGSMAEELKLQSDMLQQQGFSAASGLPTQPPPPYQPPQQPQLPQGYSLNGPGYAAMQPQPQPQGQGQCLLHRSLNCGCLHSAPVRDGLSPNSVTTTMSPAYPNSEPSSDSLNTYSNVLLDGSADNAALLVQHQQQQQQQQQQQRQQLSSGLEGQCLEALNSEQIDEFNLEDFQGGLECNVEELLQQEMRYDGLLDINIPLAAVNTNTNNVILTNNSTNSGSSNAASNSSAGVQLNQLQAQLQLQQQQQQQQQQQQHQQQLLMSNNNNNNNNNNNSNNSLELATQTATANLNARVQYSQPSVVTSPPSWVH</sequence>
<organism>
    <name type="scientific">Drosophila virilis</name>
    <name type="common">Fruit fly</name>
    <dbReference type="NCBI Taxonomy" id="7244"/>
    <lineage>
        <taxon>Eukaryota</taxon>
        <taxon>Metazoa</taxon>
        <taxon>Ecdysozoa</taxon>
        <taxon>Arthropoda</taxon>
        <taxon>Hexapoda</taxon>
        <taxon>Insecta</taxon>
        <taxon>Pterygota</taxon>
        <taxon>Neoptera</taxon>
        <taxon>Endopterygota</taxon>
        <taxon>Diptera</taxon>
        <taxon>Brachycera</taxon>
        <taxon>Muscomorpha</taxon>
        <taxon>Ephydroidea</taxon>
        <taxon>Drosophilidae</taxon>
        <taxon>Drosophila</taxon>
    </lineage>
</organism>